<sequence>MEIIPAIDLLQGSCVRLHQGDYDQVTRFSDDPLAQAQQWVKQGATRLHLVDLDGARSGQPINDQAVRLIAKELSIPVQLGGGVRSLERAEELLSCGLDRVILGTVAIENPELVMELASRHPHKIVVGIDARNGFVATRGWVEESEVEATALAQRLSKAGIAAIISTDIATDGTLAGPNLEALRAMAQASEVPVIASGGVGCMADLLSLLALEPLGVEGVIVGRALYDGRVDLHEAIQAIAEGRLQDPLSDQSRTIA</sequence>
<organism>
    <name type="scientific">Synechococcus sp. (strain CC9311)</name>
    <dbReference type="NCBI Taxonomy" id="64471"/>
    <lineage>
        <taxon>Bacteria</taxon>
        <taxon>Bacillati</taxon>
        <taxon>Cyanobacteriota</taxon>
        <taxon>Cyanophyceae</taxon>
        <taxon>Synechococcales</taxon>
        <taxon>Synechococcaceae</taxon>
        <taxon>Synechococcus</taxon>
    </lineage>
</organism>
<reference key="1">
    <citation type="journal article" date="2006" name="Proc. Natl. Acad. Sci. U.S.A.">
        <title>Genome sequence of Synechococcus CC9311: insights into adaptation to a coastal environment.</title>
        <authorList>
            <person name="Palenik B."/>
            <person name="Ren Q."/>
            <person name="Dupont C.L."/>
            <person name="Myers G.S."/>
            <person name="Heidelberg J.F."/>
            <person name="Badger J.H."/>
            <person name="Madupu R."/>
            <person name="Nelson W.C."/>
            <person name="Brinkac L.M."/>
            <person name="Dodson R.J."/>
            <person name="Durkin A.S."/>
            <person name="Daugherty S.C."/>
            <person name="Sullivan S.A."/>
            <person name="Khouri H."/>
            <person name="Mohamoud Y."/>
            <person name="Halpin R."/>
            <person name="Paulsen I.T."/>
        </authorList>
    </citation>
    <scope>NUCLEOTIDE SEQUENCE [LARGE SCALE GENOMIC DNA]</scope>
    <source>
        <strain>CC9311</strain>
    </source>
</reference>
<gene>
    <name evidence="1" type="primary">hisA</name>
    <name type="ordered locus">sync_1723</name>
</gene>
<evidence type="ECO:0000255" key="1">
    <source>
        <dbReference type="HAMAP-Rule" id="MF_01014"/>
    </source>
</evidence>
<protein>
    <recommendedName>
        <fullName evidence="1">1-(5-phosphoribosyl)-5-[(5-phosphoribosylamino)methylideneamino] imidazole-4-carboxamide isomerase</fullName>
        <ecNumber evidence="1">5.3.1.16</ecNumber>
    </recommendedName>
    <alternativeName>
        <fullName evidence="1">Phosphoribosylformimino-5-aminoimidazole carboxamide ribotide isomerase</fullName>
    </alternativeName>
</protein>
<feature type="chain" id="PRO_0000290551" description="1-(5-phosphoribosyl)-5-[(5-phosphoribosylamino)methylideneamino] imidazole-4-carboxamide isomerase">
    <location>
        <begin position="1"/>
        <end position="256"/>
    </location>
</feature>
<feature type="active site" description="Proton acceptor" evidence="1">
    <location>
        <position position="8"/>
    </location>
</feature>
<feature type="active site" description="Proton donor" evidence="1">
    <location>
        <position position="129"/>
    </location>
</feature>
<accession>Q0I9E5</accession>
<keyword id="KW-0028">Amino-acid biosynthesis</keyword>
<keyword id="KW-0963">Cytoplasm</keyword>
<keyword id="KW-0368">Histidine biosynthesis</keyword>
<keyword id="KW-0413">Isomerase</keyword>
<keyword id="KW-1185">Reference proteome</keyword>
<dbReference type="EC" id="5.3.1.16" evidence="1"/>
<dbReference type="EMBL" id="CP000435">
    <property type="protein sequence ID" value="ABI46085.1"/>
    <property type="molecule type" value="Genomic_DNA"/>
</dbReference>
<dbReference type="RefSeq" id="WP_011619640.1">
    <property type="nucleotide sequence ID" value="NC_008319.1"/>
</dbReference>
<dbReference type="SMR" id="Q0I9E5"/>
<dbReference type="STRING" id="64471.sync_1723"/>
<dbReference type="KEGG" id="syg:sync_1723"/>
<dbReference type="eggNOG" id="COG0106">
    <property type="taxonomic scope" value="Bacteria"/>
</dbReference>
<dbReference type="HOGENOM" id="CLU_048577_1_1_3"/>
<dbReference type="OrthoDB" id="9807749at2"/>
<dbReference type="UniPathway" id="UPA00031">
    <property type="reaction ID" value="UER00009"/>
</dbReference>
<dbReference type="Proteomes" id="UP000001961">
    <property type="component" value="Chromosome"/>
</dbReference>
<dbReference type="GO" id="GO:0005737">
    <property type="term" value="C:cytoplasm"/>
    <property type="evidence" value="ECO:0007669"/>
    <property type="project" value="UniProtKB-SubCell"/>
</dbReference>
<dbReference type="GO" id="GO:0003949">
    <property type="term" value="F:1-(5-phosphoribosyl)-5-[(5-phosphoribosylamino)methylideneamino]imidazole-4-carboxamide isomerase activity"/>
    <property type="evidence" value="ECO:0007669"/>
    <property type="project" value="UniProtKB-UniRule"/>
</dbReference>
<dbReference type="GO" id="GO:0000105">
    <property type="term" value="P:L-histidine biosynthetic process"/>
    <property type="evidence" value="ECO:0007669"/>
    <property type="project" value="UniProtKB-UniRule"/>
</dbReference>
<dbReference type="GO" id="GO:0000162">
    <property type="term" value="P:L-tryptophan biosynthetic process"/>
    <property type="evidence" value="ECO:0007669"/>
    <property type="project" value="TreeGrafter"/>
</dbReference>
<dbReference type="CDD" id="cd04732">
    <property type="entry name" value="HisA"/>
    <property type="match status" value="1"/>
</dbReference>
<dbReference type="FunFam" id="3.20.20.70:FF:000009">
    <property type="entry name" value="1-(5-phosphoribosyl)-5-[(5-phosphoribosylamino)methylideneamino] imidazole-4-carboxamide isomerase"/>
    <property type="match status" value="1"/>
</dbReference>
<dbReference type="Gene3D" id="3.20.20.70">
    <property type="entry name" value="Aldolase class I"/>
    <property type="match status" value="1"/>
</dbReference>
<dbReference type="HAMAP" id="MF_01014">
    <property type="entry name" value="HisA"/>
    <property type="match status" value="1"/>
</dbReference>
<dbReference type="InterPro" id="IPR013785">
    <property type="entry name" value="Aldolase_TIM"/>
</dbReference>
<dbReference type="InterPro" id="IPR006062">
    <property type="entry name" value="His_biosynth"/>
</dbReference>
<dbReference type="InterPro" id="IPR006063">
    <property type="entry name" value="HisA_bact_arch"/>
</dbReference>
<dbReference type="InterPro" id="IPR044524">
    <property type="entry name" value="Isoase_HisA-like"/>
</dbReference>
<dbReference type="InterPro" id="IPR023016">
    <property type="entry name" value="Isoase_HisA-like_bact"/>
</dbReference>
<dbReference type="InterPro" id="IPR011060">
    <property type="entry name" value="RibuloseP-bd_barrel"/>
</dbReference>
<dbReference type="NCBIfam" id="TIGR00007">
    <property type="entry name" value="1-(5-phosphoribosyl)-5-[(5-phosphoribosylamino)methylideneamino]imidazole-4-carboxamide isomerase"/>
    <property type="match status" value="1"/>
</dbReference>
<dbReference type="NCBIfam" id="NF010112">
    <property type="entry name" value="PRK13585.1"/>
    <property type="match status" value="1"/>
</dbReference>
<dbReference type="PANTHER" id="PTHR43090">
    <property type="entry name" value="1-(5-PHOSPHORIBOSYL)-5-[(5-PHOSPHORIBOSYLAMINO)METHYLIDENEAMINO] IMIDAZOLE-4-CARBOXAMIDE ISOMERASE"/>
    <property type="match status" value="1"/>
</dbReference>
<dbReference type="PANTHER" id="PTHR43090:SF2">
    <property type="entry name" value="1-(5-PHOSPHORIBOSYL)-5-[(5-PHOSPHORIBOSYLAMINO)METHYLIDENEAMINO] IMIDAZOLE-4-CARBOXAMIDE ISOMERASE"/>
    <property type="match status" value="1"/>
</dbReference>
<dbReference type="Pfam" id="PF00977">
    <property type="entry name" value="His_biosynth"/>
    <property type="match status" value="1"/>
</dbReference>
<dbReference type="SUPFAM" id="SSF51366">
    <property type="entry name" value="Ribulose-phoshate binding barrel"/>
    <property type="match status" value="1"/>
</dbReference>
<comment type="catalytic activity">
    <reaction evidence="1">
        <text>1-(5-phospho-beta-D-ribosyl)-5-[(5-phospho-beta-D-ribosylamino)methylideneamino]imidazole-4-carboxamide = 5-[(5-phospho-1-deoxy-D-ribulos-1-ylimino)methylamino]-1-(5-phospho-beta-D-ribosyl)imidazole-4-carboxamide</text>
        <dbReference type="Rhea" id="RHEA:15469"/>
        <dbReference type="ChEBI" id="CHEBI:58435"/>
        <dbReference type="ChEBI" id="CHEBI:58525"/>
        <dbReference type="EC" id="5.3.1.16"/>
    </reaction>
</comment>
<comment type="pathway">
    <text evidence="1">Amino-acid biosynthesis; L-histidine biosynthesis; L-histidine from 5-phospho-alpha-D-ribose 1-diphosphate: step 4/9.</text>
</comment>
<comment type="subcellular location">
    <subcellularLocation>
        <location evidence="1">Cytoplasm</location>
    </subcellularLocation>
</comment>
<comment type="similarity">
    <text evidence="1">Belongs to the HisA/HisF family.</text>
</comment>
<name>HIS4_SYNS3</name>
<proteinExistence type="inferred from homology"/>